<gene>
    <name type="primary">SULT1C2</name>
    <name type="synonym">SULT1C1</name>
</gene>
<proteinExistence type="evidence at protein level"/>
<organism>
    <name type="scientific">Oryctolagus cuniculus</name>
    <name type="common">Rabbit</name>
    <dbReference type="NCBI Taxonomy" id="9986"/>
    <lineage>
        <taxon>Eukaryota</taxon>
        <taxon>Metazoa</taxon>
        <taxon>Chordata</taxon>
        <taxon>Craniata</taxon>
        <taxon>Vertebrata</taxon>
        <taxon>Euteleostomi</taxon>
        <taxon>Mammalia</taxon>
        <taxon>Eutheria</taxon>
        <taxon>Euarchontoglires</taxon>
        <taxon>Glires</taxon>
        <taxon>Lagomorpha</taxon>
        <taxon>Leporidae</taxon>
        <taxon>Oryctolagus</taxon>
    </lineage>
</organism>
<reference key="1">
    <citation type="journal article" date="1999" name="Int. J. Biochem. Cell Biol.">
        <title>Molecular cloning, expression, localisation and functional characterisation of a rabbit SULT1C2 sulfotransferase.</title>
        <authorList>
            <person name="Hehonah N."/>
            <person name="Zhu X."/>
            <person name="Brix L."/>
            <person name="Bolton-Grob R."/>
            <person name="Barnett A."/>
            <person name="Windmill K."/>
            <person name="McManus M."/>
        </authorList>
    </citation>
    <scope>NUCLEOTIDE SEQUENCE [MRNA]</scope>
    <scope>TISSUE SPECIFICITY</scope>
    <scope>FUNCTION</scope>
    <scope>ALTERNATIVE SPLICING</scope>
    <scope>BIOPHYSICOCHEMICAL PROPERTIES</scope>
    <scope>SUBCELLULAR LOCATION</scope>
    <scope>CATALYTIC ACTIVITY</scope>
    <source>
        <tissue>Stomach</tissue>
    </source>
</reference>
<protein>
    <recommendedName>
        <fullName>Sulfotransferase 1C2</fullName>
        <shortName>ST1C2</shortName>
        <shortName>rabSULT1C2</shortName>
        <ecNumber evidence="5">2.8.2.1</ecNumber>
    </recommendedName>
    <alternativeName>
        <fullName>Sulfotransferase 1C1</fullName>
    </alternativeName>
</protein>
<dbReference type="EC" id="2.8.2.1" evidence="5"/>
<dbReference type="EMBL" id="AF026304">
    <property type="protein sequence ID" value="AAC00410.1"/>
    <property type="molecule type" value="mRNA"/>
</dbReference>
<dbReference type="RefSeq" id="NP_001076180.1">
    <property type="nucleotide sequence ID" value="NM_001082711.1"/>
</dbReference>
<dbReference type="SMR" id="O46503"/>
<dbReference type="FunCoup" id="O46503">
    <property type="interactions" value="53"/>
</dbReference>
<dbReference type="STRING" id="9986.ENSOCUP00000014015"/>
<dbReference type="PaxDb" id="9986-ENSOCUP00000014015"/>
<dbReference type="GeneID" id="100009458"/>
<dbReference type="KEGG" id="ocu:100009458"/>
<dbReference type="CTD" id="6819"/>
<dbReference type="eggNOG" id="KOG1584">
    <property type="taxonomic scope" value="Eukaryota"/>
</dbReference>
<dbReference type="HOGENOM" id="CLU_027239_1_2_1"/>
<dbReference type="InParanoid" id="O46503"/>
<dbReference type="OMA" id="DHAAEYW"/>
<dbReference type="OrthoDB" id="205623at2759"/>
<dbReference type="BRENDA" id="2.8.2.1">
    <property type="organism ID" value="1749"/>
</dbReference>
<dbReference type="Proteomes" id="UP000001811">
    <property type="component" value="Unplaced"/>
</dbReference>
<dbReference type="ExpressionAtlas" id="O46503">
    <property type="expression patterns" value="baseline"/>
</dbReference>
<dbReference type="GO" id="GO:0005737">
    <property type="term" value="C:cytoplasm"/>
    <property type="evidence" value="ECO:0000314"/>
    <property type="project" value="UniProtKB"/>
</dbReference>
<dbReference type="GO" id="GO:0005764">
    <property type="term" value="C:lysosome"/>
    <property type="evidence" value="ECO:0007669"/>
    <property type="project" value="UniProtKB-SubCell"/>
</dbReference>
<dbReference type="GO" id="GO:0005739">
    <property type="term" value="C:mitochondrion"/>
    <property type="evidence" value="ECO:0007669"/>
    <property type="project" value="UniProtKB-SubCell"/>
</dbReference>
<dbReference type="GO" id="GO:0004062">
    <property type="term" value="F:aryl sulfotransferase activity"/>
    <property type="evidence" value="ECO:0000314"/>
    <property type="project" value="UniProtKB"/>
</dbReference>
<dbReference type="GO" id="GO:0051922">
    <property type="term" value="F:cholesterol sulfotransferase activity"/>
    <property type="evidence" value="ECO:0007669"/>
    <property type="project" value="RHEA"/>
</dbReference>
<dbReference type="GO" id="GO:0051923">
    <property type="term" value="P:sulfation"/>
    <property type="evidence" value="ECO:0000314"/>
    <property type="project" value="UniProtKB"/>
</dbReference>
<dbReference type="FunFam" id="3.40.50.300:FF:000433">
    <property type="entry name" value="Estrogen sulfotransferase"/>
    <property type="match status" value="1"/>
</dbReference>
<dbReference type="Gene3D" id="3.40.50.300">
    <property type="entry name" value="P-loop containing nucleotide triphosphate hydrolases"/>
    <property type="match status" value="1"/>
</dbReference>
<dbReference type="InterPro" id="IPR027417">
    <property type="entry name" value="P-loop_NTPase"/>
</dbReference>
<dbReference type="InterPro" id="IPR000863">
    <property type="entry name" value="Sulfotransferase_dom"/>
</dbReference>
<dbReference type="PANTHER" id="PTHR11783">
    <property type="entry name" value="SULFOTRANSFERASE SULT"/>
    <property type="match status" value="1"/>
</dbReference>
<dbReference type="Pfam" id="PF00685">
    <property type="entry name" value="Sulfotransfer_1"/>
    <property type="match status" value="1"/>
</dbReference>
<dbReference type="SUPFAM" id="SSF52540">
    <property type="entry name" value="P-loop containing nucleoside triphosphate hydrolases"/>
    <property type="match status" value="1"/>
</dbReference>
<evidence type="ECO:0000250" key="1"/>
<evidence type="ECO:0000250" key="2">
    <source>
        <dbReference type="UniProtKB" id="O00338"/>
    </source>
</evidence>
<evidence type="ECO:0000250" key="3">
    <source>
        <dbReference type="UniProtKB" id="Q9D939"/>
    </source>
</evidence>
<evidence type="ECO:0000250" key="4">
    <source>
        <dbReference type="UniProtKB" id="Q9WUW8"/>
    </source>
</evidence>
<evidence type="ECO:0000269" key="5">
    <source>
    </source>
</evidence>
<evidence type="ECO:0000305" key="6"/>
<evidence type="ECO:0000305" key="7">
    <source>
    </source>
</evidence>
<sequence length="296" mass="34572">MALATGPGKQTQLREVEGVPLQAAIVDNWGQIQSFEAKPDDLLICTYPKSGTTWIQEIVDMIEQNGDVEKCQRALIQHRHPFIEWARPPQPSGVEKAQAMPSPRILRTHLPTRLLPPSFWENNCKFLYVARNVKDCMVSYYHFQRMNQVLPDPGTWEEYFETFINGKVAWGSWFEHVKGWWEVKGRYQILFLFYEDIKKDPKCEIRKVAQFMGKHLDETVLDKIVQETSFEKMKDNPMINRSTVPKSIMDQSISPFMRKGTVGDWKNHFTVAQSHRLDELYRKKMEGVSIDFCLEL</sequence>
<feature type="chain" id="PRO_0000085134" description="Sulfotransferase 1C2">
    <location>
        <begin position="1"/>
        <end position="296"/>
    </location>
</feature>
<feature type="active site" description="Proton acceptor" evidence="1">
    <location>
        <position position="109"/>
    </location>
</feature>
<feature type="binding site" evidence="2">
    <location>
        <begin position="49"/>
        <end position="54"/>
    </location>
    <ligand>
        <name>3'-phosphoadenylyl sulfate</name>
        <dbReference type="ChEBI" id="CHEBI:58339"/>
    </ligand>
</feature>
<feature type="binding site" evidence="1">
    <location>
        <begin position="107"/>
        <end position="109"/>
    </location>
    <ligand>
        <name>substrate</name>
    </ligand>
</feature>
<feature type="binding site" evidence="2">
    <location>
        <position position="131"/>
    </location>
    <ligand>
        <name>3'-phosphoadenylyl sulfate</name>
        <dbReference type="ChEBI" id="CHEBI:58339"/>
    </ligand>
</feature>
<feature type="binding site" evidence="2">
    <location>
        <position position="139"/>
    </location>
    <ligand>
        <name>3'-phosphoadenylyl sulfate</name>
        <dbReference type="ChEBI" id="CHEBI:58339"/>
    </ligand>
</feature>
<feature type="binding site" evidence="2">
    <location>
        <position position="194"/>
    </location>
    <ligand>
        <name>3'-phosphoadenylyl sulfate</name>
        <dbReference type="ChEBI" id="CHEBI:58339"/>
    </ligand>
</feature>
<feature type="binding site" evidence="2">
    <location>
        <begin position="228"/>
        <end position="233"/>
    </location>
    <ligand>
        <name>3'-phosphoadenylyl sulfate</name>
        <dbReference type="ChEBI" id="CHEBI:58339"/>
    </ligand>
</feature>
<feature type="binding site" evidence="2">
    <location>
        <begin position="256"/>
        <end position="260"/>
    </location>
    <ligand>
        <name>3'-phosphoadenylyl sulfate</name>
        <dbReference type="ChEBI" id="CHEBI:58339"/>
    </ligand>
</feature>
<feature type="modified residue" description="Phosphoserine" evidence="3">
    <location>
        <position position="139"/>
    </location>
</feature>
<feature type="modified residue" description="Phosphoserine" evidence="3">
    <location>
        <position position="254"/>
    </location>
</feature>
<keyword id="KW-0963">Cytoplasm</keyword>
<keyword id="KW-0458">Lysosome</keyword>
<keyword id="KW-0496">Mitochondrion</keyword>
<keyword id="KW-0597">Phosphoprotein</keyword>
<keyword id="KW-1185">Reference proteome</keyword>
<keyword id="KW-0808">Transferase</keyword>
<comment type="function">
    <text evidence="2 4 5">Sulfotransferase that utilizes 3'-phospho-5'-adenylyl sulfate (PAPS) to catalyze the sulfate conjugation of phenolic compounds (PubMed:10481272). Does not transfer sulfate to steroids, dopamine, acetaminophen, or alpha-naphthol (PubMed:10481272). Except in mitochondria, where it can add sulfate to cholesterol producing cholesterol sulfate, which alters mitochondrial membrane organization, and impacts protein complex mobility increasing state-III respiration, thereby modulating mitochondrial respiration (By similarity). Catalyzes the sulfation of the carcinogenic N-hydroxy-2-acetylaminofluorene leading to highly reactive intermediates capable of forming DNA adducts, potentially resulting in mutagenesis (By similarity).</text>
</comment>
<comment type="catalytic activity">
    <reaction evidence="5">
        <text>a phenol + 3'-phosphoadenylyl sulfate = an aryl sulfate + adenosine 3',5'-bisphosphate + H(+)</text>
        <dbReference type="Rhea" id="RHEA:12164"/>
        <dbReference type="ChEBI" id="CHEBI:15378"/>
        <dbReference type="ChEBI" id="CHEBI:33853"/>
        <dbReference type="ChEBI" id="CHEBI:58339"/>
        <dbReference type="ChEBI" id="CHEBI:58343"/>
        <dbReference type="ChEBI" id="CHEBI:140317"/>
        <dbReference type="EC" id="2.8.2.1"/>
    </reaction>
    <physiologicalReaction direction="left-to-right" evidence="7">
        <dbReference type="Rhea" id="RHEA:12165"/>
    </physiologicalReaction>
</comment>
<comment type="catalytic activity">
    <reaction evidence="4">
        <text>cholesterol + 3'-phosphoadenylyl sulfate = cholesterol sulfate + adenosine 3',5'-bisphosphate + H(+)</text>
        <dbReference type="Rhea" id="RHEA:52368"/>
        <dbReference type="ChEBI" id="CHEBI:15378"/>
        <dbReference type="ChEBI" id="CHEBI:16113"/>
        <dbReference type="ChEBI" id="CHEBI:58339"/>
        <dbReference type="ChEBI" id="CHEBI:58343"/>
        <dbReference type="ChEBI" id="CHEBI:136579"/>
    </reaction>
    <physiologicalReaction direction="left-to-right" evidence="4">
        <dbReference type="Rhea" id="RHEA:52369"/>
    </physiologicalReaction>
</comment>
<comment type="biophysicochemical properties">
    <kinetics>
        <KM evidence="5">2.2 mM for p-nitrophenol</KM>
        <Vmax evidence="5">0.39 nmol/min/mg enzyme with p-nitrophenol as substrate</Vmax>
    </kinetics>
</comment>
<comment type="subcellular location">
    <subcellularLocation>
        <location evidence="5">Cytoplasm</location>
    </subcellularLocation>
    <subcellularLocation>
        <location evidence="4">Lysosome</location>
    </subcellularLocation>
    <subcellularLocation>
        <location evidence="4">Mitochondrion</location>
    </subcellularLocation>
</comment>
<comment type="tissue specificity">
    <text evidence="5">Found in gastrointestinal tract tissues, liver and kidney.</text>
</comment>
<comment type="similarity">
    <text evidence="6">Belongs to the sulfotransferase 1 family.</text>
</comment>
<name>ST1C2_RABIT</name>
<accession>O46503</accession>